<evidence type="ECO:0000256" key="1">
    <source>
        <dbReference type="SAM" id="MobiDB-lite"/>
    </source>
</evidence>
<evidence type="ECO:0000269" key="2">
    <source>
    </source>
</evidence>
<evidence type="ECO:0000269" key="3">
    <source>
    </source>
</evidence>
<evidence type="ECO:0000305" key="4"/>
<evidence type="ECO:0007744" key="5">
    <source>
    </source>
</evidence>
<evidence type="ECO:0007744" key="6">
    <source>
    </source>
</evidence>
<evidence type="ECO:0007744" key="7">
    <source>
    </source>
</evidence>
<accession>P46678</accession>
<accession>D6W1E0</accession>
<gene>
    <name type="primary">BDP1</name>
    <name type="synonym">TFC5</name>
    <name type="ordered locus">YNL039W</name>
    <name type="ORF">N2682</name>
</gene>
<reference key="1">
    <citation type="journal article" date="1995" name="Proc. Natl. Acad. Sci. U.S.A.">
        <title>Cloning, expression, and function of TFC5, the gene encoding the B' component of the Saccharomyces cerevisiae RNA polymerase III transcription factor TFIIIB.</title>
        <authorList>
            <person name="Kassavetis G.A."/>
            <person name="Nguyen S.T."/>
            <person name="Kobayashi R."/>
            <person name="Kumar A."/>
            <person name="Geiduschek E.P."/>
            <person name="Pisano M."/>
        </authorList>
    </citation>
    <scope>NUCLEOTIDE SEQUENCE [GENOMIC DNA]</scope>
    <scope>PARTIAL PROTEIN SEQUENCE</scope>
    <source>
        <strain>ATCC 204511 / S288c / AB972</strain>
    </source>
</reference>
<reference key="2">
    <citation type="journal article" date="1996" name="EMBO J.">
        <title>A suppressor of mutations in the class III transcription system encodes a component of yeast TFIIIB.</title>
        <authorList>
            <person name="Rueth J."/>
            <person name="Conesa C."/>
            <person name="Dieci G."/>
            <person name="Lefebvre O."/>
            <person name="Duesterhoeft A."/>
            <person name="Ottonello S."/>
            <person name="Sentenac A."/>
        </authorList>
    </citation>
    <scope>NUCLEOTIDE SEQUENCE [GENOMIC DNA]</scope>
    <source>
        <strain>ATCC 204508 / S288c</strain>
    </source>
</reference>
<reference key="3">
    <citation type="journal article" date="1996" name="J. Biol. Chem.">
        <title>Cloning and functional characterization of the gene encoding the TFIIIB90 subunit of RNA polymerase III transcription factor TFIIIB.</title>
        <authorList>
            <person name="Roberts S."/>
            <person name="Miller S.J."/>
            <person name="Lane W.S."/>
            <person name="Lee S."/>
            <person name="Hahn S."/>
        </authorList>
    </citation>
    <scope>NUCLEOTIDE SEQUENCE [GENOMIC DNA]</scope>
    <source>
        <strain>ATCC 204508 / S288c</strain>
    </source>
</reference>
<reference key="4">
    <citation type="journal article" date="1997" name="Nature">
        <title>The nucleotide sequence of Saccharomyces cerevisiae chromosome XIV and its evolutionary implications.</title>
        <authorList>
            <person name="Philippsen P."/>
            <person name="Kleine K."/>
            <person name="Poehlmann R."/>
            <person name="Duesterhoeft A."/>
            <person name="Hamberg K."/>
            <person name="Hegemann J.H."/>
            <person name="Obermaier B."/>
            <person name="Urrestarazu L.A."/>
            <person name="Aert R."/>
            <person name="Albermann K."/>
            <person name="Altmann R."/>
            <person name="Andre B."/>
            <person name="Baladron V."/>
            <person name="Ballesta J.P.G."/>
            <person name="Becam A.-M."/>
            <person name="Beinhauer J.D."/>
            <person name="Boskovic J."/>
            <person name="Buitrago M.J."/>
            <person name="Bussereau F."/>
            <person name="Coster F."/>
            <person name="Crouzet M."/>
            <person name="D'Angelo M."/>
            <person name="Dal Pero F."/>
            <person name="De Antoni A."/>
            <person name="del Rey F."/>
            <person name="Doignon F."/>
            <person name="Domdey H."/>
            <person name="Dubois E."/>
            <person name="Fiedler T.A."/>
            <person name="Fleig U."/>
            <person name="Floeth M."/>
            <person name="Fritz C."/>
            <person name="Gaillardin C."/>
            <person name="Garcia-Cantalejo J.M."/>
            <person name="Glansdorff N."/>
            <person name="Goffeau A."/>
            <person name="Gueldener U."/>
            <person name="Herbert C.J."/>
            <person name="Heumann K."/>
            <person name="Heuss-Neitzel D."/>
            <person name="Hilbert H."/>
            <person name="Hinni K."/>
            <person name="Iraqui Houssaini I."/>
            <person name="Jacquet M."/>
            <person name="Jimenez A."/>
            <person name="Jonniaux J.-L."/>
            <person name="Karpfinger-Hartl L."/>
            <person name="Lanfranchi G."/>
            <person name="Lepingle A."/>
            <person name="Levesque H."/>
            <person name="Lyck R."/>
            <person name="Maftahi M."/>
            <person name="Mallet L."/>
            <person name="Maurer C.T.C."/>
            <person name="Messenguy F."/>
            <person name="Mewes H.-W."/>
            <person name="Moestl D."/>
            <person name="Nasr F."/>
            <person name="Nicaud J.-M."/>
            <person name="Niedenthal R.K."/>
            <person name="Pandolfo D."/>
            <person name="Pierard A."/>
            <person name="Piravandi E."/>
            <person name="Planta R.J."/>
            <person name="Pohl T.M."/>
            <person name="Purnelle B."/>
            <person name="Rebischung C."/>
            <person name="Remacha M.A."/>
            <person name="Revuelta J.L."/>
            <person name="Rinke M."/>
            <person name="Saiz J.E."/>
            <person name="Sartorello F."/>
            <person name="Scherens B."/>
            <person name="Sen-Gupta M."/>
            <person name="Soler-Mira A."/>
            <person name="Urbanus J.H.M."/>
            <person name="Valle G."/>
            <person name="Van Dyck L."/>
            <person name="Verhasselt P."/>
            <person name="Vierendeels F."/>
            <person name="Vissers S."/>
            <person name="Voet M."/>
            <person name="Volckaert G."/>
            <person name="Wach A."/>
            <person name="Wambutt R."/>
            <person name="Wedler H."/>
            <person name="Zollner A."/>
            <person name="Hani J."/>
        </authorList>
    </citation>
    <scope>NUCLEOTIDE SEQUENCE [LARGE SCALE GENOMIC DNA]</scope>
    <source>
        <strain>ATCC 204508 / S288c</strain>
    </source>
</reference>
<reference key="5">
    <citation type="journal article" date="2014" name="G3 (Bethesda)">
        <title>The reference genome sequence of Saccharomyces cerevisiae: Then and now.</title>
        <authorList>
            <person name="Engel S.R."/>
            <person name="Dietrich F.S."/>
            <person name="Fisk D.G."/>
            <person name="Binkley G."/>
            <person name="Balakrishnan R."/>
            <person name="Costanzo M.C."/>
            <person name="Dwight S.S."/>
            <person name="Hitz B.C."/>
            <person name="Karra K."/>
            <person name="Nash R.S."/>
            <person name="Weng S."/>
            <person name="Wong E.D."/>
            <person name="Lloyd P."/>
            <person name="Skrzypek M.S."/>
            <person name="Miyasato S.R."/>
            <person name="Simison M."/>
            <person name="Cherry J.M."/>
        </authorList>
    </citation>
    <scope>GENOME REANNOTATION</scope>
    <source>
        <strain>ATCC 204508 / S288c</strain>
    </source>
</reference>
<reference key="6">
    <citation type="journal article" date="1991" name="Mol. Cell. Biol.">
        <title>Two components of Saccharomyces cerevisiae transcription factor IIIB (TFIIIB) are stereospecifically located upstream of a tRNA gene and interact with the second-largest subunit of TFIIIC.</title>
        <authorList>
            <person name="Bartholomew B."/>
            <person name="Kassavetis G.A."/>
            <person name="Geiduschek E.P."/>
        </authorList>
    </citation>
    <scope>INTERACTION WITH TFC4</scope>
</reference>
<reference key="7">
    <citation type="journal article" date="2003" name="J. Biol. Chem.">
        <title>The Brf1 and Bdp1 subunits of transcription factor TFIIIB bind to overlapping sites in the tetratricopeptide repeats of Tfc4.</title>
        <authorList>
            <person name="Liao Y."/>
            <person name="Willis I.M."/>
            <person name="Moir R.D."/>
        </authorList>
    </citation>
    <scope>INTERACTION WITH TFC4</scope>
</reference>
<reference key="8">
    <citation type="journal article" date="2007" name="J. Proteome Res.">
        <title>Large-scale phosphorylation analysis of alpha-factor-arrested Saccharomyces cerevisiae.</title>
        <authorList>
            <person name="Li X."/>
            <person name="Gerber S.A."/>
            <person name="Rudner A.D."/>
            <person name="Beausoleil S.A."/>
            <person name="Haas W."/>
            <person name="Villen J."/>
            <person name="Elias J.E."/>
            <person name="Gygi S.P."/>
        </authorList>
    </citation>
    <scope>PHOSPHORYLATION [LARGE SCALE ANALYSIS] AT SER-49</scope>
    <scope>IDENTIFICATION BY MASS SPECTROMETRY [LARGE SCALE ANALYSIS]</scope>
    <source>
        <strain>ADR376</strain>
    </source>
</reference>
<reference key="9">
    <citation type="journal article" date="2008" name="Mol. Cell. Proteomics">
        <title>A multidimensional chromatography technology for in-depth phosphoproteome analysis.</title>
        <authorList>
            <person name="Albuquerque C.P."/>
            <person name="Smolka M.B."/>
            <person name="Payne S.H."/>
            <person name="Bafna V."/>
            <person name="Eng J."/>
            <person name="Zhou H."/>
        </authorList>
    </citation>
    <scope>PHOSPHORYLATION [LARGE SCALE ANALYSIS] AT SER-178</scope>
    <scope>IDENTIFICATION BY MASS SPECTROMETRY [LARGE SCALE ANALYSIS]</scope>
</reference>
<reference key="10">
    <citation type="journal article" date="2009" name="Science">
        <title>Global analysis of Cdk1 substrate phosphorylation sites provides insights into evolution.</title>
        <authorList>
            <person name="Holt L.J."/>
            <person name="Tuch B.B."/>
            <person name="Villen J."/>
            <person name="Johnson A.D."/>
            <person name="Gygi S.P."/>
            <person name="Morgan D.O."/>
        </authorList>
    </citation>
    <scope>PHOSPHORYLATION [LARGE SCALE ANALYSIS] AT SER-49 AND SER-178</scope>
    <scope>IDENTIFICATION BY MASS SPECTROMETRY [LARGE SCALE ANALYSIS]</scope>
</reference>
<keyword id="KW-0002">3D-structure</keyword>
<keyword id="KW-0010">Activator</keyword>
<keyword id="KW-0903">Direct protein sequencing</keyword>
<keyword id="KW-0539">Nucleus</keyword>
<keyword id="KW-0597">Phosphoprotein</keyword>
<keyword id="KW-1185">Reference proteome</keyword>
<keyword id="KW-0804">Transcription</keyword>
<keyword id="KW-0805">Transcription regulation</keyword>
<sequence>MSSIVNKSGTRFAPKVRQRRAATGGTPTPKPRTPQLFIPESKEIEEDNSDNDKGVDENETAIVEKPSLVGERSLEGFTLTGTNGHDNEIGDEGPIDASTQNPKADVIEDNVTLKPAPLQTHRDQKVPRSSRLASLSKDNESRPSFKPSFLDSSSNSNGTARRLSTISNKLPKKIRLGSITENDMNLKTFKRHRVLGKPSSAKKPAGAHRISIVSKISPPTAMTDSLDRNEFSSETSTSREADENENYVISKVKDIPKKVRDGESAKYFIDEENFTMAELCKPNFPIGQISENFEKSKMAKKAKLEKRRHLRELRMRARQEFKPLHSLTKEEQEEEEEKRKEERDKLLNADIPESDRKAHTAIQLKLNPDGTMAIDEETMVVDRHKNASIENEYKEKVDENPFANLYNYGSYGRGSYTDPWTVEEMIKFYKALSMWGTDFNLISQLYPYRSRKQVKAKFVNEEKKRPILIELALRSKLPPNFDEYCCEIKKNIGTVADFNEKLIELQNEHKHHMKEIEEAKNTAKEEDQTAQRLNDANLNKKGSGGIMTNDLKVYRKTEVVLGTIDDLKRKKLKERNNDDNEDNEGSEEEPEIDQ</sequence>
<name>TFC5_YEAST</name>
<feature type="chain" id="PRO_0000072498" description="Transcription factor TFIIIB component B''">
    <location>
        <begin position="1"/>
        <end position="594"/>
    </location>
</feature>
<feature type="domain" description="SANT">
    <location>
        <begin position="415"/>
        <end position="466"/>
    </location>
</feature>
<feature type="region of interest" description="Disordered" evidence="1">
    <location>
        <begin position="1"/>
        <end position="169"/>
    </location>
</feature>
<feature type="region of interest" description="Disordered" evidence="1">
    <location>
        <begin position="217"/>
        <end position="245"/>
    </location>
</feature>
<feature type="region of interest" description="Disordered" evidence="1">
    <location>
        <begin position="317"/>
        <end position="343"/>
    </location>
</feature>
<feature type="region of interest" description="Disordered" evidence="1">
    <location>
        <begin position="520"/>
        <end position="547"/>
    </location>
</feature>
<feature type="region of interest" description="Disordered" evidence="1">
    <location>
        <begin position="567"/>
        <end position="594"/>
    </location>
</feature>
<feature type="compositionally biased region" description="Polar residues" evidence="1">
    <location>
        <begin position="150"/>
        <end position="168"/>
    </location>
</feature>
<feature type="compositionally biased region" description="Basic and acidic residues" evidence="1">
    <location>
        <begin position="225"/>
        <end position="241"/>
    </location>
</feature>
<feature type="compositionally biased region" description="Basic and acidic residues" evidence="1">
    <location>
        <begin position="317"/>
        <end position="330"/>
    </location>
</feature>
<feature type="compositionally biased region" description="Basic and acidic residues" evidence="1">
    <location>
        <begin position="520"/>
        <end position="529"/>
    </location>
</feature>
<feature type="compositionally biased region" description="Acidic residues" evidence="1">
    <location>
        <begin position="579"/>
        <end position="594"/>
    </location>
</feature>
<feature type="modified residue" description="Phosphoserine" evidence="5 7">
    <location>
        <position position="49"/>
    </location>
</feature>
<feature type="modified residue" description="Phosphoserine" evidence="6 7">
    <location>
        <position position="178"/>
    </location>
</feature>
<dbReference type="EMBL" id="U31819">
    <property type="protein sequence ID" value="AAC49073.1"/>
    <property type="molecule type" value="Genomic_DNA"/>
</dbReference>
<dbReference type="EMBL" id="U38415">
    <property type="protein sequence ID" value="AAC49364.1"/>
    <property type="molecule type" value="Genomic_DNA"/>
</dbReference>
<dbReference type="EMBL" id="U37533">
    <property type="protein sequence ID" value="AAC49348.1"/>
    <property type="molecule type" value="Genomic_DNA"/>
</dbReference>
<dbReference type="EMBL" id="Z71315">
    <property type="protein sequence ID" value="CAA95906.1"/>
    <property type="molecule type" value="Genomic_DNA"/>
</dbReference>
<dbReference type="EMBL" id="BK006947">
    <property type="protein sequence ID" value="DAA10506.1"/>
    <property type="molecule type" value="Genomic_DNA"/>
</dbReference>
<dbReference type="PIR" id="S62141">
    <property type="entry name" value="S62141"/>
</dbReference>
<dbReference type="RefSeq" id="NP_014359.3">
    <property type="nucleotide sequence ID" value="NM_001182878.3"/>
</dbReference>
<dbReference type="PDB" id="6CNB">
    <property type="method" value="EM"/>
    <property type="resolution" value="4.10 A"/>
    <property type="chains" value="S=1-594"/>
</dbReference>
<dbReference type="PDB" id="6CNC">
    <property type="method" value="EM"/>
    <property type="resolution" value="4.10 A"/>
    <property type="chains" value="S=1-594"/>
</dbReference>
<dbReference type="PDB" id="6CND">
    <property type="method" value="EM"/>
    <property type="resolution" value="4.80 A"/>
    <property type="chains" value="S=1-594"/>
</dbReference>
<dbReference type="PDB" id="6CNF">
    <property type="method" value="EM"/>
    <property type="resolution" value="4.50 A"/>
    <property type="chains" value="S=1-594"/>
</dbReference>
<dbReference type="PDB" id="6EU0">
    <property type="method" value="EM"/>
    <property type="resolution" value="4.00 A"/>
    <property type="chains" value="V=1-594"/>
</dbReference>
<dbReference type="PDB" id="6F40">
    <property type="method" value="EM"/>
    <property type="resolution" value="3.70 A"/>
    <property type="chains" value="W=1-594"/>
</dbReference>
<dbReference type="PDB" id="6F41">
    <property type="method" value="EM"/>
    <property type="resolution" value="4.30 A"/>
    <property type="chains" value="W=1-594"/>
</dbReference>
<dbReference type="PDB" id="6F42">
    <property type="method" value="EM"/>
    <property type="resolution" value="5.50 A"/>
    <property type="chains" value="W=1-594"/>
</dbReference>
<dbReference type="PDB" id="6F44">
    <property type="method" value="EM"/>
    <property type="resolution" value="4.20 A"/>
    <property type="chains" value="W=1-594"/>
</dbReference>
<dbReference type="PDB" id="7Q5B">
    <property type="method" value="EM"/>
    <property type="resolution" value="3.98 A"/>
    <property type="chains" value="X=1-594"/>
</dbReference>
<dbReference type="PDBsum" id="6CNB"/>
<dbReference type="PDBsum" id="6CNC"/>
<dbReference type="PDBsum" id="6CND"/>
<dbReference type="PDBsum" id="6CNF"/>
<dbReference type="PDBsum" id="6EU0"/>
<dbReference type="PDBsum" id="6F40"/>
<dbReference type="PDBsum" id="6F41"/>
<dbReference type="PDBsum" id="6F42"/>
<dbReference type="PDBsum" id="6F44"/>
<dbReference type="PDBsum" id="7Q5B"/>
<dbReference type="EMDB" id="EMD-13831"/>
<dbReference type="EMDB" id="EMD-3955"/>
<dbReference type="EMDB" id="EMD-4180"/>
<dbReference type="EMDB" id="EMD-4181"/>
<dbReference type="EMDB" id="EMD-4182"/>
<dbReference type="EMDB" id="EMD-4183"/>
<dbReference type="EMDB" id="EMD-7530"/>
<dbReference type="EMDB" id="EMD-7531"/>
<dbReference type="EMDB" id="EMD-7532"/>
<dbReference type="EMDB" id="EMD-7533"/>
<dbReference type="SMR" id="P46678"/>
<dbReference type="BioGRID" id="35785">
    <property type="interactions" value="67"/>
</dbReference>
<dbReference type="ComplexPortal" id="CPX-1143">
    <property type="entry name" value="General transcription factor TFIIIB complex"/>
</dbReference>
<dbReference type="DIP" id="DIP-964N"/>
<dbReference type="FunCoup" id="P46678">
    <property type="interactions" value="147"/>
</dbReference>
<dbReference type="IntAct" id="P46678">
    <property type="interactions" value="25"/>
</dbReference>
<dbReference type="MINT" id="P46678"/>
<dbReference type="STRING" id="4932.YNL039W"/>
<dbReference type="iPTMnet" id="P46678"/>
<dbReference type="PaxDb" id="4932-YNL039W"/>
<dbReference type="PeptideAtlas" id="P46678"/>
<dbReference type="EnsemblFungi" id="YNL039W_mRNA">
    <property type="protein sequence ID" value="YNL039W"/>
    <property type="gene ID" value="YNL039W"/>
</dbReference>
<dbReference type="GeneID" id="855689"/>
<dbReference type="KEGG" id="sce:YNL039W"/>
<dbReference type="AGR" id="SGD:S000004984"/>
<dbReference type="SGD" id="S000004984">
    <property type="gene designation" value="BDP1"/>
</dbReference>
<dbReference type="VEuPathDB" id="FungiDB:YNL039W"/>
<dbReference type="eggNOG" id="KOG2009">
    <property type="taxonomic scope" value="Eukaryota"/>
</dbReference>
<dbReference type="GeneTree" id="ENSGT00390000012762"/>
<dbReference type="HOGENOM" id="CLU_021041_1_0_1"/>
<dbReference type="InParanoid" id="P46678"/>
<dbReference type="OMA" id="HPVMIEL"/>
<dbReference type="OrthoDB" id="272624at2759"/>
<dbReference type="BioCyc" id="YEAST:G3O-33075-MONOMER"/>
<dbReference type="Reactome" id="R-SCE-76066">
    <property type="pathway name" value="RNA Polymerase III Transcription Initiation From Type 2 Promoter"/>
</dbReference>
<dbReference type="BioGRID-ORCS" id="855689">
    <property type="hits" value="1 hit in 10 CRISPR screens"/>
</dbReference>
<dbReference type="PRO" id="PR:P46678"/>
<dbReference type="Proteomes" id="UP000002311">
    <property type="component" value="Chromosome XIV"/>
</dbReference>
<dbReference type="RNAct" id="P46678">
    <property type="molecule type" value="protein"/>
</dbReference>
<dbReference type="GO" id="GO:0005654">
    <property type="term" value="C:nucleoplasm"/>
    <property type="evidence" value="ECO:0000304"/>
    <property type="project" value="Reactome"/>
</dbReference>
<dbReference type="GO" id="GO:0000126">
    <property type="term" value="C:transcription factor TFIIIB complex"/>
    <property type="evidence" value="ECO:0000314"/>
    <property type="project" value="SGD"/>
</dbReference>
<dbReference type="GO" id="GO:0000995">
    <property type="term" value="F:RNA polymerase III general transcription initiation factor activity"/>
    <property type="evidence" value="ECO:0007669"/>
    <property type="project" value="InterPro"/>
</dbReference>
<dbReference type="GO" id="GO:0001156">
    <property type="term" value="F:TFIIIC-class transcription factor complex binding"/>
    <property type="evidence" value="ECO:0000314"/>
    <property type="project" value="SGD"/>
</dbReference>
<dbReference type="GO" id="GO:0001112">
    <property type="term" value="P:DNA-templated transcription open complex formation"/>
    <property type="evidence" value="ECO:0000315"/>
    <property type="project" value="SGD"/>
</dbReference>
<dbReference type="GO" id="GO:0006355">
    <property type="term" value="P:regulation of DNA-templated transcription"/>
    <property type="evidence" value="ECO:0000314"/>
    <property type="project" value="MGI"/>
</dbReference>
<dbReference type="GO" id="GO:0006359">
    <property type="term" value="P:regulation of transcription by RNA polymerase III"/>
    <property type="evidence" value="ECO:0000314"/>
    <property type="project" value="ComplexPortal"/>
</dbReference>
<dbReference type="GO" id="GO:0070898">
    <property type="term" value="P:RNA polymerase III preinitiation complex assembly"/>
    <property type="evidence" value="ECO:0000314"/>
    <property type="project" value="SGD"/>
</dbReference>
<dbReference type="CDD" id="cd00167">
    <property type="entry name" value="SANT"/>
    <property type="match status" value="1"/>
</dbReference>
<dbReference type="FunFam" id="1.10.10.60:FF:000466">
    <property type="entry name" value="Transcription factor TFIIIB subunit"/>
    <property type="match status" value="1"/>
</dbReference>
<dbReference type="Gene3D" id="1.10.10.60">
    <property type="entry name" value="Homeodomain-like"/>
    <property type="match status" value="1"/>
</dbReference>
<dbReference type="InterPro" id="IPR017174">
    <property type="entry name" value="Bdp1_fungi"/>
</dbReference>
<dbReference type="InterPro" id="IPR009057">
    <property type="entry name" value="Homeodomain-like_sf"/>
</dbReference>
<dbReference type="InterPro" id="IPR001005">
    <property type="entry name" value="SANT/Myb"/>
</dbReference>
<dbReference type="InterPro" id="IPR039467">
    <property type="entry name" value="TFIIIB_B''_Myb"/>
</dbReference>
<dbReference type="PANTHER" id="PTHR22929">
    <property type="entry name" value="RNA POLYMERASE III TRANSCRIPTION INITIATION FACTOR B"/>
    <property type="match status" value="1"/>
</dbReference>
<dbReference type="PANTHER" id="PTHR22929:SF0">
    <property type="entry name" value="TRANSCRIPTION FACTOR TFIIIB COMPONENT B'' HOMOLOG"/>
    <property type="match status" value="1"/>
</dbReference>
<dbReference type="Pfam" id="PF15963">
    <property type="entry name" value="Myb_DNA-bind_7"/>
    <property type="match status" value="1"/>
</dbReference>
<dbReference type="PIRSF" id="PIRSF037327">
    <property type="entry name" value="TFIIIB_Bdp1_fun"/>
    <property type="match status" value="1"/>
</dbReference>
<dbReference type="SMART" id="SM00717">
    <property type="entry name" value="SANT"/>
    <property type="match status" value="1"/>
</dbReference>
<dbReference type="SUPFAM" id="SSF46689">
    <property type="entry name" value="Homeodomain-like"/>
    <property type="match status" value="1"/>
</dbReference>
<organism>
    <name type="scientific">Saccharomyces cerevisiae (strain ATCC 204508 / S288c)</name>
    <name type="common">Baker's yeast</name>
    <dbReference type="NCBI Taxonomy" id="559292"/>
    <lineage>
        <taxon>Eukaryota</taxon>
        <taxon>Fungi</taxon>
        <taxon>Dikarya</taxon>
        <taxon>Ascomycota</taxon>
        <taxon>Saccharomycotina</taxon>
        <taxon>Saccharomycetes</taxon>
        <taxon>Saccharomycetales</taxon>
        <taxon>Saccharomycetaceae</taxon>
        <taxon>Saccharomyces</taxon>
    </lineage>
</organism>
<comment type="function">
    <text>General activator of RNA polymerase III transcription.</text>
</comment>
<comment type="subunit">
    <text evidence="2 3">TFIIIB comprises the TATA-binding protein (TBP), the B-related factor (BRF) and the B'' component (BDP1). Interacts with TFC4.</text>
</comment>
<comment type="subcellular location">
    <subcellularLocation>
        <location>Nucleus</location>
    </subcellularLocation>
</comment>
<comment type="similarity">
    <text evidence="4">Belongs to the TFC5 family.</text>
</comment>
<proteinExistence type="evidence at protein level"/>
<protein>
    <recommendedName>
        <fullName>Transcription factor TFIIIB component B''</fullName>
    </recommendedName>
    <alternativeName>
        <fullName>TFIIIB90</fullName>
    </alternativeName>
</protein>